<reference key="1">
    <citation type="journal article" date="2009" name="Genome Res.">
        <title>Complete genome of the cellulolytic thermophile Acidothermus cellulolyticus 11B provides insights into its ecophysiological and evolutionary adaptations.</title>
        <authorList>
            <person name="Barabote R.D."/>
            <person name="Xie G."/>
            <person name="Leu D.H."/>
            <person name="Normand P."/>
            <person name="Necsulea A."/>
            <person name="Daubin V."/>
            <person name="Medigue C."/>
            <person name="Adney W.S."/>
            <person name="Xu X.C."/>
            <person name="Lapidus A."/>
            <person name="Parales R.E."/>
            <person name="Detter C."/>
            <person name="Pujic P."/>
            <person name="Bruce D."/>
            <person name="Lavire C."/>
            <person name="Challacombe J.F."/>
            <person name="Brettin T.S."/>
            <person name="Berry A.M."/>
        </authorList>
    </citation>
    <scope>NUCLEOTIDE SEQUENCE [LARGE SCALE GENOMIC DNA]</scope>
    <source>
        <strain>ATCC 43068 / DSM 8971 / 11B</strain>
    </source>
</reference>
<sequence length="149" mass="15752">MKLILTQEVAGLGGPGDVVEVRDGYGRNYLLPKRLAMPASPGAVKQVALIKRAREVREIRDLDQARALRDQLEALPVTLPARAGSGGRLFGSVTPDDIAAAVHAAGGPKLDKRRIEISGPIKTIGSHQVTVRLHPEVSATVSVEVVPAS</sequence>
<feature type="chain" id="PRO_1000014728" description="Large ribosomal subunit protein bL9">
    <location>
        <begin position="1"/>
        <end position="149"/>
    </location>
</feature>
<name>RL9_ACIC1</name>
<evidence type="ECO:0000255" key="1">
    <source>
        <dbReference type="HAMAP-Rule" id="MF_00503"/>
    </source>
</evidence>
<evidence type="ECO:0000305" key="2"/>
<accession>A0LWU2</accession>
<keyword id="KW-1185">Reference proteome</keyword>
<keyword id="KW-0687">Ribonucleoprotein</keyword>
<keyword id="KW-0689">Ribosomal protein</keyword>
<keyword id="KW-0694">RNA-binding</keyword>
<keyword id="KW-0699">rRNA-binding</keyword>
<gene>
    <name evidence="1" type="primary">rplI</name>
    <name type="ordered locus">Acel_2130</name>
</gene>
<dbReference type="EMBL" id="CP000481">
    <property type="protein sequence ID" value="ABK53902.1"/>
    <property type="molecule type" value="Genomic_DNA"/>
</dbReference>
<dbReference type="RefSeq" id="WP_011720965.1">
    <property type="nucleotide sequence ID" value="NC_008578.1"/>
</dbReference>
<dbReference type="SMR" id="A0LWU2"/>
<dbReference type="FunCoup" id="A0LWU2">
    <property type="interactions" value="264"/>
</dbReference>
<dbReference type="STRING" id="351607.Acel_2130"/>
<dbReference type="KEGG" id="ace:Acel_2130"/>
<dbReference type="eggNOG" id="COG0359">
    <property type="taxonomic scope" value="Bacteria"/>
</dbReference>
<dbReference type="HOGENOM" id="CLU_078938_5_1_11"/>
<dbReference type="InParanoid" id="A0LWU2"/>
<dbReference type="OrthoDB" id="9788336at2"/>
<dbReference type="Proteomes" id="UP000008221">
    <property type="component" value="Chromosome"/>
</dbReference>
<dbReference type="GO" id="GO:1990904">
    <property type="term" value="C:ribonucleoprotein complex"/>
    <property type="evidence" value="ECO:0007669"/>
    <property type="project" value="UniProtKB-KW"/>
</dbReference>
<dbReference type="GO" id="GO:0005840">
    <property type="term" value="C:ribosome"/>
    <property type="evidence" value="ECO:0007669"/>
    <property type="project" value="UniProtKB-KW"/>
</dbReference>
<dbReference type="GO" id="GO:0019843">
    <property type="term" value="F:rRNA binding"/>
    <property type="evidence" value="ECO:0007669"/>
    <property type="project" value="UniProtKB-UniRule"/>
</dbReference>
<dbReference type="GO" id="GO:0003735">
    <property type="term" value="F:structural constituent of ribosome"/>
    <property type="evidence" value="ECO:0007669"/>
    <property type="project" value="InterPro"/>
</dbReference>
<dbReference type="GO" id="GO:0006412">
    <property type="term" value="P:translation"/>
    <property type="evidence" value="ECO:0007669"/>
    <property type="project" value="UniProtKB-UniRule"/>
</dbReference>
<dbReference type="FunFam" id="3.40.5.10:FF:000003">
    <property type="entry name" value="50S ribosomal protein L9"/>
    <property type="match status" value="1"/>
</dbReference>
<dbReference type="Gene3D" id="3.10.430.100">
    <property type="entry name" value="Ribosomal protein L9, C-terminal domain"/>
    <property type="match status" value="1"/>
</dbReference>
<dbReference type="Gene3D" id="3.40.5.10">
    <property type="entry name" value="Ribosomal protein L9, N-terminal domain"/>
    <property type="match status" value="1"/>
</dbReference>
<dbReference type="HAMAP" id="MF_00503">
    <property type="entry name" value="Ribosomal_bL9"/>
    <property type="match status" value="1"/>
</dbReference>
<dbReference type="InterPro" id="IPR000244">
    <property type="entry name" value="Ribosomal_bL9"/>
</dbReference>
<dbReference type="InterPro" id="IPR009027">
    <property type="entry name" value="Ribosomal_bL9/RNase_H1_N"/>
</dbReference>
<dbReference type="InterPro" id="IPR020594">
    <property type="entry name" value="Ribosomal_bL9_bac/chp"/>
</dbReference>
<dbReference type="InterPro" id="IPR020069">
    <property type="entry name" value="Ribosomal_bL9_C"/>
</dbReference>
<dbReference type="InterPro" id="IPR036791">
    <property type="entry name" value="Ribosomal_bL9_C_sf"/>
</dbReference>
<dbReference type="InterPro" id="IPR020070">
    <property type="entry name" value="Ribosomal_bL9_N"/>
</dbReference>
<dbReference type="InterPro" id="IPR036935">
    <property type="entry name" value="Ribosomal_bL9_N_sf"/>
</dbReference>
<dbReference type="NCBIfam" id="TIGR00158">
    <property type="entry name" value="L9"/>
    <property type="match status" value="1"/>
</dbReference>
<dbReference type="PANTHER" id="PTHR21368">
    <property type="entry name" value="50S RIBOSOMAL PROTEIN L9"/>
    <property type="match status" value="1"/>
</dbReference>
<dbReference type="Pfam" id="PF03948">
    <property type="entry name" value="Ribosomal_L9_C"/>
    <property type="match status" value="1"/>
</dbReference>
<dbReference type="Pfam" id="PF01281">
    <property type="entry name" value="Ribosomal_L9_N"/>
    <property type="match status" value="1"/>
</dbReference>
<dbReference type="SUPFAM" id="SSF55658">
    <property type="entry name" value="L9 N-domain-like"/>
    <property type="match status" value="1"/>
</dbReference>
<dbReference type="SUPFAM" id="SSF55653">
    <property type="entry name" value="Ribosomal protein L9 C-domain"/>
    <property type="match status" value="1"/>
</dbReference>
<dbReference type="PROSITE" id="PS00651">
    <property type="entry name" value="RIBOSOMAL_L9"/>
    <property type="match status" value="1"/>
</dbReference>
<comment type="function">
    <text evidence="1">Binds to the 23S rRNA.</text>
</comment>
<comment type="similarity">
    <text evidence="1">Belongs to the bacterial ribosomal protein bL9 family.</text>
</comment>
<protein>
    <recommendedName>
        <fullName evidence="1">Large ribosomal subunit protein bL9</fullName>
    </recommendedName>
    <alternativeName>
        <fullName evidence="2">50S ribosomal protein L9</fullName>
    </alternativeName>
</protein>
<organism>
    <name type="scientific">Acidothermus cellulolyticus (strain ATCC 43068 / DSM 8971 / 11B)</name>
    <dbReference type="NCBI Taxonomy" id="351607"/>
    <lineage>
        <taxon>Bacteria</taxon>
        <taxon>Bacillati</taxon>
        <taxon>Actinomycetota</taxon>
        <taxon>Actinomycetes</taxon>
        <taxon>Acidothermales</taxon>
        <taxon>Acidothermaceae</taxon>
        <taxon>Acidothermus</taxon>
    </lineage>
</organism>
<proteinExistence type="inferred from homology"/>